<protein>
    <recommendedName>
        <fullName evidence="1">Glutamyl-Q tRNA(Asp) synthetase</fullName>
        <shortName evidence="1">Glu-Q-RSs</shortName>
        <ecNumber evidence="1">6.1.1.-</ecNumber>
    </recommendedName>
</protein>
<gene>
    <name evidence="1" type="primary">gluQ</name>
    <name type="ordered locus">VV1_1647</name>
    <name type="ORF">VV1_1646</name>
</gene>
<accession>Q8DC08</accession>
<accession>Q8DC09</accession>
<organism>
    <name type="scientific">Vibrio vulnificus (strain CMCP6)</name>
    <dbReference type="NCBI Taxonomy" id="216895"/>
    <lineage>
        <taxon>Bacteria</taxon>
        <taxon>Pseudomonadati</taxon>
        <taxon>Pseudomonadota</taxon>
        <taxon>Gammaproteobacteria</taxon>
        <taxon>Vibrionales</taxon>
        <taxon>Vibrionaceae</taxon>
        <taxon>Vibrio</taxon>
    </lineage>
</organism>
<dbReference type="EC" id="6.1.1.-" evidence="1"/>
<dbReference type="EMBL" id="AE016795">
    <property type="protein sequence ID" value="AAO10064.2"/>
    <property type="molecule type" value="Genomic_DNA"/>
</dbReference>
<dbReference type="SMR" id="Q8DC08"/>
<dbReference type="KEGG" id="vvu:VV1_1647"/>
<dbReference type="HOGENOM" id="CLU_015768_0_1_6"/>
<dbReference type="Proteomes" id="UP000002275">
    <property type="component" value="Chromosome 1"/>
</dbReference>
<dbReference type="GO" id="GO:0005829">
    <property type="term" value="C:cytosol"/>
    <property type="evidence" value="ECO:0007669"/>
    <property type="project" value="TreeGrafter"/>
</dbReference>
<dbReference type="GO" id="GO:0005524">
    <property type="term" value="F:ATP binding"/>
    <property type="evidence" value="ECO:0007669"/>
    <property type="project" value="UniProtKB-KW"/>
</dbReference>
<dbReference type="GO" id="GO:0004818">
    <property type="term" value="F:glutamate-tRNA ligase activity"/>
    <property type="evidence" value="ECO:0007669"/>
    <property type="project" value="TreeGrafter"/>
</dbReference>
<dbReference type="GO" id="GO:0008270">
    <property type="term" value="F:zinc ion binding"/>
    <property type="evidence" value="ECO:0007669"/>
    <property type="project" value="UniProtKB-UniRule"/>
</dbReference>
<dbReference type="GO" id="GO:0006424">
    <property type="term" value="P:glutamyl-tRNA aminoacylation"/>
    <property type="evidence" value="ECO:0007669"/>
    <property type="project" value="InterPro"/>
</dbReference>
<dbReference type="GO" id="GO:0006400">
    <property type="term" value="P:tRNA modification"/>
    <property type="evidence" value="ECO:0007669"/>
    <property type="project" value="InterPro"/>
</dbReference>
<dbReference type="FunFam" id="3.40.50.620:FF:000093">
    <property type="entry name" value="Glutamyl-Q tRNA(Asp) synthetase"/>
    <property type="match status" value="1"/>
</dbReference>
<dbReference type="Gene3D" id="3.40.50.620">
    <property type="entry name" value="HUPs"/>
    <property type="match status" value="1"/>
</dbReference>
<dbReference type="HAMAP" id="MF_01428">
    <property type="entry name" value="Glu_Q_tRNA_synth"/>
    <property type="match status" value="1"/>
</dbReference>
<dbReference type="InterPro" id="IPR022380">
    <property type="entry name" value="Glu-Q_tRNA(Asp)_Synthase"/>
</dbReference>
<dbReference type="InterPro" id="IPR000924">
    <property type="entry name" value="Glu/Gln-tRNA-synth"/>
</dbReference>
<dbReference type="InterPro" id="IPR020058">
    <property type="entry name" value="Glu/Gln-tRNA-synth_Ib_cat-dom"/>
</dbReference>
<dbReference type="InterPro" id="IPR049940">
    <property type="entry name" value="GluQ/Sye"/>
</dbReference>
<dbReference type="InterPro" id="IPR014729">
    <property type="entry name" value="Rossmann-like_a/b/a_fold"/>
</dbReference>
<dbReference type="NCBIfam" id="NF004314">
    <property type="entry name" value="PRK05710.1-3"/>
    <property type="match status" value="1"/>
</dbReference>
<dbReference type="NCBIfam" id="TIGR03838">
    <property type="entry name" value="queuosine_YadB"/>
    <property type="match status" value="1"/>
</dbReference>
<dbReference type="PANTHER" id="PTHR43311">
    <property type="entry name" value="GLUTAMATE--TRNA LIGASE"/>
    <property type="match status" value="1"/>
</dbReference>
<dbReference type="PANTHER" id="PTHR43311:SF1">
    <property type="entry name" value="GLUTAMYL-Q TRNA(ASP) SYNTHETASE"/>
    <property type="match status" value="1"/>
</dbReference>
<dbReference type="Pfam" id="PF00749">
    <property type="entry name" value="tRNA-synt_1c"/>
    <property type="match status" value="1"/>
</dbReference>
<dbReference type="PRINTS" id="PR00987">
    <property type="entry name" value="TRNASYNTHGLU"/>
</dbReference>
<dbReference type="SUPFAM" id="SSF52374">
    <property type="entry name" value="Nucleotidylyl transferase"/>
    <property type="match status" value="1"/>
</dbReference>
<proteinExistence type="inferred from homology"/>
<evidence type="ECO:0000255" key="1">
    <source>
        <dbReference type="HAMAP-Rule" id="MF_01428"/>
    </source>
</evidence>
<keyword id="KW-0030">Aminoacyl-tRNA synthetase</keyword>
<keyword id="KW-0067">ATP-binding</keyword>
<keyword id="KW-0436">Ligase</keyword>
<keyword id="KW-0479">Metal-binding</keyword>
<keyword id="KW-0547">Nucleotide-binding</keyword>
<keyword id="KW-0862">Zinc</keyword>
<name>GLUQ_VIBVU</name>
<feature type="chain" id="PRO_0000208333" description="Glutamyl-Q tRNA(Asp) synthetase">
    <location>
        <begin position="1"/>
        <end position="303"/>
    </location>
</feature>
<feature type="short sequence motif" description="'HIGH' region">
    <location>
        <begin position="19"/>
        <end position="29"/>
    </location>
</feature>
<feature type="short sequence motif" description="'KMSKS' region">
    <location>
        <begin position="233"/>
        <end position="237"/>
    </location>
</feature>
<feature type="binding site" evidence="1">
    <location>
        <begin position="16"/>
        <end position="20"/>
    </location>
    <ligand>
        <name>L-glutamate</name>
        <dbReference type="ChEBI" id="CHEBI:29985"/>
    </ligand>
</feature>
<feature type="binding site" evidence="1">
    <location>
        <position position="52"/>
    </location>
    <ligand>
        <name>L-glutamate</name>
        <dbReference type="ChEBI" id="CHEBI:29985"/>
    </ligand>
</feature>
<feature type="binding site" evidence="1">
    <location>
        <position position="108"/>
    </location>
    <ligand>
        <name>Zn(2+)</name>
        <dbReference type="ChEBI" id="CHEBI:29105"/>
    </ligand>
</feature>
<feature type="binding site" evidence="1">
    <location>
        <position position="110"/>
    </location>
    <ligand>
        <name>Zn(2+)</name>
        <dbReference type="ChEBI" id="CHEBI:29105"/>
    </ligand>
</feature>
<feature type="binding site" evidence="1">
    <location>
        <position position="122"/>
    </location>
    <ligand>
        <name>Zn(2+)</name>
        <dbReference type="ChEBI" id="CHEBI:29105"/>
    </ligand>
</feature>
<feature type="binding site" evidence="1">
    <location>
        <position position="126"/>
    </location>
    <ligand>
        <name>Zn(2+)</name>
        <dbReference type="ChEBI" id="CHEBI:29105"/>
    </ligand>
</feature>
<feature type="binding site" evidence="1">
    <location>
        <position position="177"/>
    </location>
    <ligand>
        <name>L-glutamate</name>
        <dbReference type="ChEBI" id="CHEBI:29985"/>
    </ligand>
</feature>
<feature type="binding site" evidence="1">
    <location>
        <position position="195"/>
    </location>
    <ligand>
        <name>L-glutamate</name>
        <dbReference type="ChEBI" id="CHEBI:29985"/>
    </ligand>
</feature>
<feature type="binding site" evidence="1">
    <location>
        <position position="236"/>
    </location>
    <ligand>
        <name>ATP</name>
        <dbReference type="ChEBI" id="CHEBI:30616"/>
    </ligand>
</feature>
<sequence length="303" mass="34465">MLPFCFEMTSMSYIGRFAPSPSGPLHFGSLIAALGSYFQAKSQHGQWLVRIEDLDPPREMPGAADLILKTLETYHLFWDGEVVYQSQRHHLYQAQIDHWLQSGQAYYCQCSRKQIKEMGGYYNGHCQELHLDAGAIRLKMTQPITHFDDLRHGQMHIPLELAQEDFIIKRRDGLFAYNLAVVLDDIDQGVTEVVRGADLIEPTGRQISLYRMLGQVPVRYLHLPLAMDKNGNKLSKQNHATGIDLTHPASMILEAMAFLGFAIPKELHQANLDEILHWGVQNWRLNQLPESLEITARFSNGTA</sequence>
<comment type="function">
    <text evidence="1">Catalyzes the tRNA-independent activation of glutamate in presence of ATP and the subsequent transfer of glutamate onto a tRNA(Asp). Glutamate is transferred on the 2-amino-5-(4,5-dihydroxy-2-cyclopenten-1-yl) moiety of the queuosine in the wobble position of the QUC anticodon.</text>
</comment>
<comment type="cofactor">
    <cofactor evidence="1">
        <name>Zn(2+)</name>
        <dbReference type="ChEBI" id="CHEBI:29105"/>
    </cofactor>
    <text evidence="1">Binds 1 zinc ion per subunit.</text>
</comment>
<comment type="similarity">
    <text evidence="1">Belongs to the class-I aminoacyl-tRNA synthetase family. GluQ subfamily.</text>
</comment>
<reference key="1">
    <citation type="submission" date="2002-12" db="EMBL/GenBank/DDBJ databases">
        <title>Complete genome sequence of Vibrio vulnificus CMCP6.</title>
        <authorList>
            <person name="Rhee J.H."/>
            <person name="Kim S.Y."/>
            <person name="Chung S.S."/>
            <person name="Kim J.J."/>
            <person name="Moon Y.H."/>
            <person name="Jeong H."/>
            <person name="Choy H.E."/>
        </authorList>
    </citation>
    <scope>NUCLEOTIDE SEQUENCE [LARGE SCALE GENOMIC DNA]</scope>
    <source>
        <strain>CMCP6</strain>
    </source>
</reference>
<reference key="2">
    <citation type="journal article" date="2011" name="Mol. Syst. Biol.">
        <title>Integrative genome-scale metabolic analysis of Vibrio vulnificus for drug targeting and discovery.</title>
        <authorList>
            <person name="Kim H.U."/>
            <person name="Kim S.Y."/>
            <person name="Jeong H."/>
            <person name="Kim T.Y."/>
            <person name="Kim J.J."/>
            <person name="Choy H.E."/>
            <person name="Yi K.Y."/>
            <person name="Rhee J.H."/>
            <person name="Lee S.Y."/>
        </authorList>
    </citation>
    <scope>SEQUENCE REVISION</scope>
    <source>
        <strain>CMCP6</strain>
    </source>
</reference>